<sequence length="224" mass="23756">MSGKTVIVLLSGGLDSMVCAGLAREAGARIVALTIDYNQRHRVELESAARIAAHVGAAEHIVLPLDLRRFGGSALTADIDVPKDGVGTDIPVTYVPARNLIFLSLTLGLAEARQAADIVIGVNALDYSGYPDCRPAFIQGFEKLAALATRDGDQGVRFHIHAPLQHMTKADIAAEAARLGMDAAMSWSCYDPTPEGLHCGACDSCRLRRKGFADAGLADPTRYA</sequence>
<proteinExistence type="inferred from homology"/>
<dbReference type="EC" id="6.3.4.20" evidence="1"/>
<dbReference type="EMBL" id="CP000356">
    <property type="protein sequence ID" value="ABF53069.1"/>
    <property type="status" value="ALT_INIT"/>
    <property type="molecule type" value="Genomic_DNA"/>
</dbReference>
<dbReference type="SMR" id="Q1GTF3"/>
<dbReference type="STRING" id="317655.Sala_1355"/>
<dbReference type="KEGG" id="sal:Sala_1355"/>
<dbReference type="eggNOG" id="COG0603">
    <property type="taxonomic scope" value="Bacteria"/>
</dbReference>
<dbReference type="HOGENOM" id="CLU_081854_1_0_5"/>
<dbReference type="UniPathway" id="UPA00391"/>
<dbReference type="Proteomes" id="UP000006578">
    <property type="component" value="Chromosome"/>
</dbReference>
<dbReference type="GO" id="GO:0005524">
    <property type="term" value="F:ATP binding"/>
    <property type="evidence" value="ECO:0007669"/>
    <property type="project" value="UniProtKB-UniRule"/>
</dbReference>
<dbReference type="GO" id="GO:0016879">
    <property type="term" value="F:ligase activity, forming carbon-nitrogen bonds"/>
    <property type="evidence" value="ECO:0007669"/>
    <property type="project" value="UniProtKB-UniRule"/>
</dbReference>
<dbReference type="GO" id="GO:0008270">
    <property type="term" value="F:zinc ion binding"/>
    <property type="evidence" value="ECO:0007669"/>
    <property type="project" value="UniProtKB-UniRule"/>
</dbReference>
<dbReference type="GO" id="GO:0008616">
    <property type="term" value="P:queuosine biosynthetic process"/>
    <property type="evidence" value="ECO:0007669"/>
    <property type="project" value="UniProtKB-UniRule"/>
</dbReference>
<dbReference type="CDD" id="cd01995">
    <property type="entry name" value="QueC-like"/>
    <property type="match status" value="1"/>
</dbReference>
<dbReference type="Gene3D" id="3.40.50.620">
    <property type="entry name" value="HUPs"/>
    <property type="match status" value="1"/>
</dbReference>
<dbReference type="HAMAP" id="MF_01633">
    <property type="entry name" value="QueC"/>
    <property type="match status" value="1"/>
</dbReference>
<dbReference type="InterPro" id="IPR018317">
    <property type="entry name" value="QueC"/>
</dbReference>
<dbReference type="InterPro" id="IPR014729">
    <property type="entry name" value="Rossmann-like_a/b/a_fold"/>
</dbReference>
<dbReference type="NCBIfam" id="TIGR00364">
    <property type="entry name" value="7-cyano-7-deazaguanine synthase QueC"/>
    <property type="match status" value="1"/>
</dbReference>
<dbReference type="PANTHER" id="PTHR42914">
    <property type="entry name" value="7-CYANO-7-DEAZAGUANINE SYNTHASE"/>
    <property type="match status" value="1"/>
</dbReference>
<dbReference type="PANTHER" id="PTHR42914:SF1">
    <property type="entry name" value="7-CYANO-7-DEAZAGUANINE SYNTHASE"/>
    <property type="match status" value="1"/>
</dbReference>
<dbReference type="Pfam" id="PF06508">
    <property type="entry name" value="QueC"/>
    <property type="match status" value="1"/>
</dbReference>
<dbReference type="PIRSF" id="PIRSF006293">
    <property type="entry name" value="ExsB"/>
    <property type="match status" value="1"/>
</dbReference>
<dbReference type="SUPFAM" id="SSF52402">
    <property type="entry name" value="Adenine nucleotide alpha hydrolases-like"/>
    <property type="match status" value="1"/>
</dbReference>
<keyword id="KW-0067">ATP-binding</keyword>
<keyword id="KW-0436">Ligase</keyword>
<keyword id="KW-0479">Metal-binding</keyword>
<keyword id="KW-0547">Nucleotide-binding</keyword>
<keyword id="KW-0671">Queuosine biosynthesis</keyword>
<keyword id="KW-1185">Reference proteome</keyword>
<keyword id="KW-0862">Zinc</keyword>
<accession>Q1GTF3</accession>
<name>QUEC1_SPHAL</name>
<organism>
    <name type="scientific">Sphingopyxis alaskensis (strain DSM 13593 / LMG 18877 / RB2256)</name>
    <name type="common">Sphingomonas alaskensis</name>
    <dbReference type="NCBI Taxonomy" id="317655"/>
    <lineage>
        <taxon>Bacteria</taxon>
        <taxon>Pseudomonadati</taxon>
        <taxon>Pseudomonadota</taxon>
        <taxon>Alphaproteobacteria</taxon>
        <taxon>Sphingomonadales</taxon>
        <taxon>Sphingomonadaceae</taxon>
        <taxon>Sphingopyxis</taxon>
    </lineage>
</organism>
<evidence type="ECO:0000255" key="1">
    <source>
        <dbReference type="HAMAP-Rule" id="MF_01633"/>
    </source>
</evidence>
<evidence type="ECO:0000305" key="2"/>
<feature type="chain" id="PRO_0000255928" description="7-cyano-7-deazaguanine synthase 1">
    <location>
        <begin position="1"/>
        <end position="224"/>
    </location>
</feature>
<feature type="binding site" evidence="1">
    <location>
        <begin position="10"/>
        <end position="20"/>
    </location>
    <ligand>
        <name>ATP</name>
        <dbReference type="ChEBI" id="CHEBI:30616"/>
    </ligand>
</feature>
<feature type="binding site" evidence="1">
    <location>
        <position position="189"/>
    </location>
    <ligand>
        <name>Zn(2+)</name>
        <dbReference type="ChEBI" id="CHEBI:29105"/>
    </ligand>
</feature>
<feature type="binding site" evidence="1">
    <location>
        <position position="199"/>
    </location>
    <ligand>
        <name>Zn(2+)</name>
        <dbReference type="ChEBI" id="CHEBI:29105"/>
    </ligand>
</feature>
<feature type="binding site" evidence="1">
    <location>
        <position position="202"/>
    </location>
    <ligand>
        <name>Zn(2+)</name>
        <dbReference type="ChEBI" id="CHEBI:29105"/>
    </ligand>
</feature>
<feature type="binding site" evidence="1">
    <location>
        <position position="205"/>
    </location>
    <ligand>
        <name>Zn(2+)</name>
        <dbReference type="ChEBI" id="CHEBI:29105"/>
    </ligand>
</feature>
<reference key="1">
    <citation type="journal article" date="2009" name="Proc. Natl. Acad. Sci. U.S.A.">
        <title>The genomic basis of trophic strategy in marine bacteria.</title>
        <authorList>
            <person name="Lauro F.M."/>
            <person name="McDougald D."/>
            <person name="Thomas T."/>
            <person name="Williams T.J."/>
            <person name="Egan S."/>
            <person name="Rice S."/>
            <person name="DeMaere M.Z."/>
            <person name="Ting L."/>
            <person name="Ertan H."/>
            <person name="Johnson J."/>
            <person name="Ferriera S."/>
            <person name="Lapidus A."/>
            <person name="Anderson I."/>
            <person name="Kyrpides N."/>
            <person name="Munk A.C."/>
            <person name="Detter C."/>
            <person name="Han C.S."/>
            <person name="Brown M.V."/>
            <person name="Robb F.T."/>
            <person name="Kjelleberg S."/>
            <person name="Cavicchioli R."/>
        </authorList>
    </citation>
    <scope>NUCLEOTIDE SEQUENCE [LARGE SCALE GENOMIC DNA]</scope>
    <source>
        <strain>DSM 13593 / LMG 18877 / RB2256</strain>
    </source>
</reference>
<gene>
    <name evidence="1" type="primary">queC1</name>
    <name type="ordered locus">Sala_1355</name>
</gene>
<protein>
    <recommendedName>
        <fullName evidence="1">7-cyano-7-deazaguanine synthase 1</fullName>
        <ecNumber evidence="1">6.3.4.20</ecNumber>
    </recommendedName>
    <alternativeName>
        <fullName evidence="1">7-cyano-7-carbaguanine synthase 1</fullName>
    </alternativeName>
    <alternativeName>
        <fullName evidence="1">PreQ(0) synthase 1</fullName>
    </alternativeName>
    <alternativeName>
        <fullName evidence="1">Queuosine biosynthesis protein QueC 1</fullName>
    </alternativeName>
</protein>
<comment type="function">
    <text evidence="1">Catalyzes the ATP-dependent conversion of 7-carboxy-7-deazaguanine (CDG) to 7-cyano-7-deazaguanine (preQ(0)).</text>
</comment>
<comment type="catalytic activity">
    <reaction evidence="1">
        <text>7-carboxy-7-deazaguanine + NH4(+) + ATP = 7-cyano-7-deazaguanine + ADP + phosphate + H2O + H(+)</text>
        <dbReference type="Rhea" id="RHEA:27982"/>
        <dbReference type="ChEBI" id="CHEBI:15377"/>
        <dbReference type="ChEBI" id="CHEBI:15378"/>
        <dbReference type="ChEBI" id="CHEBI:28938"/>
        <dbReference type="ChEBI" id="CHEBI:30616"/>
        <dbReference type="ChEBI" id="CHEBI:43474"/>
        <dbReference type="ChEBI" id="CHEBI:45075"/>
        <dbReference type="ChEBI" id="CHEBI:61036"/>
        <dbReference type="ChEBI" id="CHEBI:456216"/>
        <dbReference type="EC" id="6.3.4.20"/>
    </reaction>
</comment>
<comment type="cofactor">
    <cofactor evidence="1">
        <name>Zn(2+)</name>
        <dbReference type="ChEBI" id="CHEBI:29105"/>
    </cofactor>
    <text evidence="1">Binds 1 zinc ion per subunit.</text>
</comment>
<comment type="pathway">
    <text evidence="1">Purine metabolism; 7-cyano-7-deazaguanine biosynthesis.</text>
</comment>
<comment type="similarity">
    <text evidence="1">Belongs to the QueC family.</text>
</comment>
<comment type="sequence caution" evidence="2">
    <conflict type="erroneous initiation">
        <sequence resource="EMBL-CDS" id="ABF53069"/>
    </conflict>
</comment>